<sequence>MIKAILIFNNHGKPRLSKFYQPYSEDTQQQIIRETFHLVSKRDENVCNFLEGGLLIGGSDNKLIYRHYATLYFVFCVDSSESELGILDLIQVFVETLDKCFENVCELDLIFHVDKVHNILAEMVMGGMVLETNMNEIVTQIDAQNKLEKSEAGLAGAPARAVSAVKNMNLPEIPRNINIGDISIKVPNLPSFK</sequence>
<keyword id="KW-0968">Cytoplasmic vesicle</keyword>
<keyword id="KW-0333">Golgi apparatus</keyword>
<keyword id="KW-0472">Membrane</keyword>
<keyword id="KW-0597">Phosphoprotein</keyword>
<keyword id="KW-0653">Protein transport</keyword>
<keyword id="KW-1185">Reference proteome</keyword>
<keyword id="KW-0813">Transport</keyword>
<gene>
    <name type="primary">AP3S1</name>
</gene>
<protein>
    <recommendedName>
        <fullName>AP-3 complex subunit sigma-1</fullName>
    </recommendedName>
    <alternativeName>
        <fullName>AP-3 complex subunit sigma-3A</fullName>
    </alternativeName>
    <alternativeName>
        <fullName>Adaptor-related protein complex 3 subunit sigma-1</fullName>
    </alternativeName>
    <alternativeName>
        <fullName>Sigma 3A-adaptin</fullName>
    </alternativeName>
    <alternativeName>
        <fullName>Sigma-adaptin 3a</fullName>
    </alternativeName>
</protein>
<name>AP3S1_BOVIN</name>
<dbReference type="EMBL" id="BC110218">
    <property type="protein sequence ID" value="AAI10219.1"/>
    <property type="molecule type" value="mRNA"/>
</dbReference>
<dbReference type="RefSeq" id="NP_001039881.1">
    <property type="nucleotide sequence ID" value="NM_001046416.1"/>
</dbReference>
<dbReference type="SMR" id="Q2YDH6"/>
<dbReference type="FunCoup" id="Q2YDH6">
    <property type="interactions" value="3441"/>
</dbReference>
<dbReference type="STRING" id="9913.ENSBTAP00000058473"/>
<dbReference type="GeneID" id="536359"/>
<dbReference type="KEGG" id="bta:536359"/>
<dbReference type="CTD" id="1176"/>
<dbReference type="VEuPathDB" id="HostDB:ENSBTAG00000051386"/>
<dbReference type="InParanoid" id="Q2YDH6"/>
<dbReference type="OMA" id="DLIFNWQ"/>
<dbReference type="OrthoDB" id="9691922at2759"/>
<dbReference type="Reactome" id="R-BTA-432722">
    <property type="pathway name" value="Golgi Associated Vesicle Biogenesis"/>
</dbReference>
<dbReference type="Proteomes" id="UP000009136">
    <property type="component" value="Chromosome 10"/>
</dbReference>
<dbReference type="Bgee" id="ENSBTAG00000051386">
    <property type="expression patterns" value="Expressed in occipital lobe and 107 other cell types or tissues"/>
</dbReference>
<dbReference type="GO" id="GO:0030123">
    <property type="term" value="C:AP-3 adaptor complex"/>
    <property type="evidence" value="ECO:0007669"/>
    <property type="project" value="InterPro"/>
</dbReference>
<dbReference type="GO" id="GO:1904115">
    <property type="term" value="C:axon cytoplasm"/>
    <property type="evidence" value="ECO:0007669"/>
    <property type="project" value="GOC"/>
</dbReference>
<dbReference type="GO" id="GO:0030659">
    <property type="term" value="C:cytoplasmic vesicle membrane"/>
    <property type="evidence" value="ECO:0007669"/>
    <property type="project" value="UniProtKB-SubCell"/>
</dbReference>
<dbReference type="GO" id="GO:0005794">
    <property type="term" value="C:Golgi apparatus"/>
    <property type="evidence" value="ECO:0007669"/>
    <property type="project" value="UniProtKB-SubCell"/>
</dbReference>
<dbReference type="GO" id="GO:0043231">
    <property type="term" value="C:intracellular membrane-bounded organelle"/>
    <property type="evidence" value="ECO:0000318"/>
    <property type="project" value="GO_Central"/>
</dbReference>
<dbReference type="GO" id="GO:0008089">
    <property type="term" value="P:anterograde axonal transport"/>
    <property type="evidence" value="ECO:0000250"/>
    <property type="project" value="UniProtKB"/>
</dbReference>
<dbReference type="GO" id="GO:0048490">
    <property type="term" value="P:anterograde synaptic vesicle transport"/>
    <property type="evidence" value="ECO:0000250"/>
    <property type="project" value="UniProtKB"/>
</dbReference>
<dbReference type="GO" id="GO:0006896">
    <property type="term" value="P:Golgi to vacuole transport"/>
    <property type="evidence" value="ECO:0007669"/>
    <property type="project" value="InterPro"/>
</dbReference>
<dbReference type="GO" id="GO:0006886">
    <property type="term" value="P:intracellular protein transport"/>
    <property type="evidence" value="ECO:0007669"/>
    <property type="project" value="InterPro"/>
</dbReference>
<dbReference type="GO" id="GO:0016192">
    <property type="term" value="P:vesicle-mediated transport"/>
    <property type="evidence" value="ECO:0000318"/>
    <property type="project" value="GO_Central"/>
</dbReference>
<dbReference type="CDD" id="cd14834">
    <property type="entry name" value="AP3_sigma"/>
    <property type="match status" value="1"/>
</dbReference>
<dbReference type="FunFam" id="3.30.450.60:FF:000001">
    <property type="entry name" value="AP complex subunit sigma"/>
    <property type="match status" value="1"/>
</dbReference>
<dbReference type="Gene3D" id="3.30.450.60">
    <property type="match status" value="1"/>
</dbReference>
<dbReference type="InterPro" id="IPR016635">
    <property type="entry name" value="AP_complex_ssu"/>
</dbReference>
<dbReference type="InterPro" id="IPR022775">
    <property type="entry name" value="AP_mu_sigma_su"/>
</dbReference>
<dbReference type="InterPro" id="IPR027155">
    <property type="entry name" value="APS3"/>
</dbReference>
<dbReference type="InterPro" id="IPR000804">
    <property type="entry name" value="Clathrin_sm-chain_CS"/>
</dbReference>
<dbReference type="InterPro" id="IPR011012">
    <property type="entry name" value="Longin-like_dom_sf"/>
</dbReference>
<dbReference type="PANTHER" id="PTHR11753">
    <property type="entry name" value="ADAPTOR COMPLEXES SMALL SUBUNIT FAMILY"/>
    <property type="match status" value="1"/>
</dbReference>
<dbReference type="Pfam" id="PF01217">
    <property type="entry name" value="Clat_adaptor_s"/>
    <property type="match status" value="1"/>
</dbReference>
<dbReference type="SUPFAM" id="SSF64356">
    <property type="entry name" value="SNARE-like"/>
    <property type="match status" value="1"/>
</dbReference>
<dbReference type="PROSITE" id="PS00989">
    <property type="entry name" value="CLAT_ADAPTOR_S"/>
    <property type="match status" value="1"/>
</dbReference>
<comment type="function">
    <text evidence="1">Part of the AP-3 complex, an adaptor-related complex which is not clathrin-associated. The complex is associated with the Golgi region as well as more peripheral structures. It facilitates the budding of vesicles from the Golgi membrane and may be directly involved in trafficking to lysosomes. In concert with the BLOC-1 complex, AP-3 is required to target cargos into vesicles assembled at cell bodies for delivery into neurites and nerve terminals (By similarity).</text>
</comment>
<comment type="subunit">
    <text evidence="1">Adaptor protein complex 3 (AP-3) is a heterotetramer composed of two large adaptins (delta-type subunit AP3D1 and beta-type subunit AP3B1 or AP3B2), a medium adaptin (mu-type subunit AP3M1 or AP3M2) and a small adaptin (sigma-type subunit APS1 or AP3S2). Interacts with AGAP1. AP-3 associates with the BLOC-1 complex (By similarity).</text>
</comment>
<comment type="subcellular location">
    <subcellularLocation>
        <location>Golgi apparatus</location>
    </subcellularLocation>
    <subcellularLocation>
        <location evidence="1">Cytoplasmic vesicle membrane</location>
        <topology evidence="1">Peripheral membrane protein</topology>
        <orientation evidence="1">Cytoplasmic side</orientation>
    </subcellularLocation>
    <text evidence="1">Component of the coat surrounding the cytoplasmic face of coated vesicles located at the Golgi complex.</text>
</comment>
<comment type="similarity">
    <text evidence="3">Belongs to the adaptor complexes small subunit family.</text>
</comment>
<accession>Q2YDH6</accession>
<reference key="1">
    <citation type="submission" date="2005-11" db="EMBL/GenBank/DDBJ databases">
        <authorList>
            <consortium name="NIH - Mammalian Gene Collection (MGC) project"/>
        </authorList>
    </citation>
    <scope>NUCLEOTIDE SEQUENCE [LARGE SCALE MRNA]</scope>
    <source>
        <strain>Crossbred X Angus</strain>
        <tissue>Liver</tissue>
    </source>
</reference>
<proteinExistence type="evidence at transcript level"/>
<evidence type="ECO:0000250" key="1"/>
<evidence type="ECO:0000250" key="2">
    <source>
        <dbReference type="UniProtKB" id="Q92572"/>
    </source>
</evidence>
<evidence type="ECO:0000305" key="3"/>
<organism>
    <name type="scientific">Bos taurus</name>
    <name type="common">Bovine</name>
    <dbReference type="NCBI Taxonomy" id="9913"/>
    <lineage>
        <taxon>Eukaryota</taxon>
        <taxon>Metazoa</taxon>
        <taxon>Chordata</taxon>
        <taxon>Craniata</taxon>
        <taxon>Vertebrata</taxon>
        <taxon>Euteleostomi</taxon>
        <taxon>Mammalia</taxon>
        <taxon>Eutheria</taxon>
        <taxon>Laurasiatheria</taxon>
        <taxon>Artiodactyla</taxon>
        <taxon>Ruminantia</taxon>
        <taxon>Pecora</taxon>
        <taxon>Bovidae</taxon>
        <taxon>Bovinae</taxon>
        <taxon>Bos</taxon>
    </lineage>
</organism>
<feature type="chain" id="PRO_0000247318" description="AP-3 complex subunit sigma-1">
    <location>
        <begin position="1"/>
        <end position="193"/>
    </location>
</feature>
<feature type="modified residue" description="Phosphoserine" evidence="2">
    <location>
        <position position="191"/>
    </location>
</feature>